<reference key="1">
    <citation type="journal article" date="2003" name="BMC Genomics">
        <title>Gene discovery in the hamster: a comparative genomics approach for gene annotation by sequencing of hamster testis cDNAs.</title>
        <authorList>
            <person name="Oduru S."/>
            <person name="Campbell J.L."/>
            <person name="Karri S."/>
            <person name="Hendry W.J."/>
            <person name="Khan S.A."/>
            <person name="Williams S.C."/>
        </authorList>
    </citation>
    <scope>NUCLEOTIDE SEQUENCE [MRNA] (ISOFORMS 1; 2 AND 3)</scope>
</reference>
<reference key="2">
    <citation type="journal article" date="2004" name="Nature">
        <title>DNA sequence and analysis of human chromosome 9.</title>
        <authorList>
            <person name="Humphray S.J."/>
            <person name="Oliver K."/>
            <person name="Hunt A.R."/>
            <person name="Plumb R.W."/>
            <person name="Loveland J.E."/>
            <person name="Howe K.L."/>
            <person name="Andrews T.D."/>
            <person name="Searle S."/>
            <person name="Hunt S.E."/>
            <person name="Scott C.E."/>
            <person name="Jones M.C."/>
            <person name="Ainscough R."/>
            <person name="Almeida J.P."/>
            <person name="Ambrose K.D."/>
            <person name="Ashwell R.I.S."/>
            <person name="Babbage A.K."/>
            <person name="Babbage S."/>
            <person name="Bagguley C.L."/>
            <person name="Bailey J."/>
            <person name="Banerjee R."/>
            <person name="Barker D.J."/>
            <person name="Barlow K.F."/>
            <person name="Bates K."/>
            <person name="Beasley H."/>
            <person name="Beasley O."/>
            <person name="Bird C.P."/>
            <person name="Bray-Allen S."/>
            <person name="Brown A.J."/>
            <person name="Brown J.Y."/>
            <person name="Burford D."/>
            <person name="Burrill W."/>
            <person name="Burton J."/>
            <person name="Carder C."/>
            <person name="Carter N.P."/>
            <person name="Chapman J.C."/>
            <person name="Chen Y."/>
            <person name="Clarke G."/>
            <person name="Clark S.Y."/>
            <person name="Clee C.M."/>
            <person name="Clegg S."/>
            <person name="Collier R.E."/>
            <person name="Corby N."/>
            <person name="Crosier M."/>
            <person name="Cummings A.T."/>
            <person name="Davies J."/>
            <person name="Dhami P."/>
            <person name="Dunn M."/>
            <person name="Dutta I."/>
            <person name="Dyer L.W."/>
            <person name="Earthrowl M.E."/>
            <person name="Faulkner L."/>
            <person name="Fleming C.J."/>
            <person name="Frankish A."/>
            <person name="Frankland J.A."/>
            <person name="French L."/>
            <person name="Fricker D.G."/>
            <person name="Garner P."/>
            <person name="Garnett J."/>
            <person name="Ghori J."/>
            <person name="Gilbert J.G.R."/>
            <person name="Glison C."/>
            <person name="Grafham D.V."/>
            <person name="Gribble S."/>
            <person name="Griffiths C."/>
            <person name="Griffiths-Jones S."/>
            <person name="Grocock R."/>
            <person name="Guy J."/>
            <person name="Hall R.E."/>
            <person name="Hammond S."/>
            <person name="Harley J.L."/>
            <person name="Harrison E.S.I."/>
            <person name="Hart E.A."/>
            <person name="Heath P.D."/>
            <person name="Henderson C.D."/>
            <person name="Hopkins B.L."/>
            <person name="Howard P.J."/>
            <person name="Howden P.J."/>
            <person name="Huckle E."/>
            <person name="Johnson C."/>
            <person name="Johnson D."/>
            <person name="Joy A.A."/>
            <person name="Kay M."/>
            <person name="Keenan S."/>
            <person name="Kershaw J.K."/>
            <person name="Kimberley A.M."/>
            <person name="King A."/>
            <person name="Knights A."/>
            <person name="Laird G.K."/>
            <person name="Langford C."/>
            <person name="Lawlor S."/>
            <person name="Leongamornlert D.A."/>
            <person name="Leversha M."/>
            <person name="Lloyd C."/>
            <person name="Lloyd D.M."/>
            <person name="Lovell J."/>
            <person name="Martin S."/>
            <person name="Mashreghi-Mohammadi M."/>
            <person name="Matthews L."/>
            <person name="McLaren S."/>
            <person name="McLay K.E."/>
            <person name="McMurray A."/>
            <person name="Milne S."/>
            <person name="Nickerson T."/>
            <person name="Nisbett J."/>
            <person name="Nordsiek G."/>
            <person name="Pearce A.V."/>
            <person name="Peck A.I."/>
            <person name="Porter K.M."/>
            <person name="Pandian R."/>
            <person name="Pelan S."/>
            <person name="Phillimore B."/>
            <person name="Povey S."/>
            <person name="Ramsey Y."/>
            <person name="Rand V."/>
            <person name="Scharfe M."/>
            <person name="Sehra H.K."/>
            <person name="Shownkeen R."/>
            <person name="Sims S.K."/>
            <person name="Skuce C.D."/>
            <person name="Smith M."/>
            <person name="Steward C.A."/>
            <person name="Swarbreck D."/>
            <person name="Sycamore N."/>
            <person name="Tester J."/>
            <person name="Thorpe A."/>
            <person name="Tracey A."/>
            <person name="Tromans A."/>
            <person name="Thomas D.W."/>
            <person name="Wall M."/>
            <person name="Wallis J.M."/>
            <person name="West A.P."/>
            <person name="Whitehead S.L."/>
            <person name="Willey D.L."/>
            <person name="Williams S.A."/>
            <person name="Wilming L."/>
            <person name="Wray P.W."/>
            <person name="Young L."/>
            <person name="Ashurst J.L."/>
            <person name="Coulson A."/>
            <person name="Blocker H."/>
            <person name="Durbin R.M."/>
            <person name="Sulston J.E."/>
            <person name="Hubbard T."/>
            <person name="Jackson M.J."/>
            <person name="Bentley D.R."/>
            <person name="Beck S."/>
            <person name="Rogers J."/>
            <person name="Dunham I."/>
        </authorList>
    </citation>
    <scope>NUCLEOTIDE SEQUENCE [LARGE SCALE GENOMIC DNA]</scope>
    <scope>ALTERNATIVE SPLICING (ISOFORM 4)</scope>
</reference>
<reference key="3">
    <citation type="journal article" date="2004" name="Genome Res.">
        <title>The status, quality, and expansion of the NIH full-length cDNA project: the Mammalian Gene Collection (MGC).</title>
        <authorList>
            <consortium name="The MGC Project Team"/>
        </authorList>
    </citation>
    <scope>NUCLEOTIDE SEQUENCE [LARGE SCALE MRNA] (ISOFORM 1)</scope>
</reference>
<reference key="4">
    <citation type="journal article" date="2007" name="BMC Genomics">
        <title>The full-ORF clone resource of the German cDNA consortium.</title>
        <authorList>
            <person name="Bechtel S."/>
            <person name="Rosenfelder H."/>
            <person name="Duda A."/>
            <person name="Schmidt C.P."/>
            <person name="Ernst U."/>
            <person name="Wellenreuther R."/>
            <person name="Mehrle A."/>
            <person name="Schuster C."/>
            <person name="Bahr A."/>
            <person name="Bloecker H."/>
            <person name="Heubner D."/>
            <person name="Hoerlein A."/>
            <person name="Michel G."/>
            <person name="Wedler H."/>
            <person name="Koehrer K."/>
            <person name="Ottenwaelder B."/>
            <person name="Poustka A."/>
            <person name="Wiemann S."/>
            <person name="Schupp I."/>
        </authorList>
    </citation>
    <scope>NUCLEOTIDE SEQUENCE [LARGE SCALE MRNA] OF 569-1401 (ISOFORM 1)</scope>
    <scope>VARIANT ASP-1036</scope>
    <source>
        <tissue>Testis</tissue>
    </source>
</reference>
<keyword id="KW-0025">Alternative splicing</keyword>
<keyword id="KW-0067">ATP-binding</keyword>
<keyword id="KW-0966">Cell projection</keyword>
<keyword id="KW-0969">Cilium</keyword>
<keyword id="KW-0970">Cilium biogenesis/degradation</keyword>
<keyword id="KW-0175">Coiled coil</keyword>
<keyword id="KW-0963">Cytoplasm</keyword>
<keyword id="KW-0206">Cytoskeleton</keyword>
<keyword id="KW-0493">Microtubule</keyword>
<keyword id="KW-0505">Motor protein</keyword>
<keyword id="KW-0547">Nucleotide-binding</keyword>
<keyword id="KW-0597">Phosphoprotein</keyword>
<keyword id="KW-1267">Proteomics identification</keyword>
<keyword id="KW-1185">Reference proteome</keyword>
<gene>
    <name type="primary">KIF27</name>
</gene>
<proteinExistence type="evidence at protein level"/>
<accession>Q86VH2</accession>
<accession>B2RTR8</accession>
<accession>Q5T6W0</accession>
<accession>Q86VH0</accession>
<accession>Q86VH1</accession>
<accession>Q9UF54</accession>
<dbReference type="EMBL" id="AY237536">
    <property type="protein sequence ID" value="AAP04413.1"/>
    <property type="molecule type" value="mRNA"/>
</dbReference>
<dbReference type="EMBL" id="AY237537">
    <property type="protein sequence ID" value="AAP04414.1"/>
    <property type="molecule type" value="mRNA"/>
</dbReference>
<dbReference type="EMBL" id="AY237538">
    <property type="protein sequence ID" value="AAP04415.1"/>
    <property type="molecule type" value="mRNA"/>
</dbReference>
<dbReference type="EMBL" id="AL354733">
    <property type="status" value="NOT_ANNOTATED_CDS"/>
    <property type="molecule type" value="Genomic_DNA"/>
</dbReference>
<dbReference type="EMBL" id="BC140788">
    <property type="protein sequence ID" value="AAI40789.1"/>
    <property type="molecule type" value="mRNA"/>
</dbReference>
<dbReference type="EMBL" id="AL133654">
    <property type="protein sequence ID" value="CAB63770.1"/>
    <property type="status" value="ALT_FRAME"/>
    <property type="molecule type" value="mRNA"/>
</dbReference>
<dbReference type="CCDS" id="CCDS65071.1">
    <molecule id="Q86VH2-2"/>
</dbReference>
<dbReference type="CCDS" id="CCDS65072.1">
    <molecule id="Q86VH2-3"/>
</dbReference>
<dbReference type="CCDS" id="CCDS6665.1">
    <molecule id="Q86VH2-1"/>
</dbReference>
<dbReference type="PIR" id="T43446">
    <property type="entry name" value="T43446"/>
</dbReference>
<dbReference type="RefSeq" id="NP_001258856.1">
    <molecule id="Q86VH2-2"/>
    <property type="nucleotide sequence ID" value="NM_001271927.3"/>
</dbReference>
<dbReference type="RefSeq" id="NP_001258857.1">
    <molecule id="Q86VH2-3"/>
    <property type="nucleotide sequence ID" value="NM_001271928.3"/>
</dbReference>
<dbReference type="RefSeq" id="NP_060046.1">
    <molecule id="Q86VH2-1"/>
    <property type="nucleotide sequence ID" value="NM_017576.4"/>
</dbReference>
<dbReference type="RefSeq" id="XP_016870392.1">
    <molecule id="Q86VH2-1"/>
    <property type="nucleotide sequence ID" value="XM_017014903.2"/>
</dbReference>
<dbReference type="RefSeq" id="XP_016870393.1">
    <molecule id="Q86VH2-1"/>
    <property type="nucleotide sequence ID" value="XM_017014904.2"/>
</dbReference>
<dbReference type="RefSeq" id="XP_016870396.1">
    <property type="nucleotide sequence ID" value="XM_017014907.1"/>
</dbReference>
<dbReference type="RefSeq" id="XP_016870397.1">
    <property type="nucleotide sequence ID" value="XM_017014908.1"/>
</dbReference>
<dbReference type="RefSeq" id="XP_047279528.1">
    <molecule id="Q86VH2-1"/>
    <property type="nucleotide sequence ID" value="XM_047423572.1"/>
</dbReference>
<dbReference type="RefSeq" id="XP_047279529.1">
    <molecule id="Q86VH2-1"/>
    <property type="nucleotide sequence ID" value="XM_047423573.1"/>
</dbReference>
<dbReference type="RefSeq" id="XP_047279530.1">
    <molecule id="Q86VH2-1"/>
    <property type="nucleotide sequence ID" value="XM_047423574.1"/>
</dbReference>
<dbReference type="RefSeq" id="XP_047279531.1">
    <molecule id="Q86VH2-1"/>
    <property type="nucleotide sequence ID" value="XM_047423575.1"/>
</dbReference>
<dbReference type="RefSeq" id="XP_047279533.1">
    <molecule id="Q86VH2-3"/>
    <property type="nucleotide sequence ID" value="XM_047423577.1"/>
</dbReference>
<dbReference type="RefSeq" id="XP_054219225.1">
    <molecule id="Q86VH2-1"/>
    <property type="nucleotide sequence ID" value="XM_054363250.1"/>
</dbReference>
<dbReference type="RefSeq" id="XP_054219226.1">
    <molecule id="Q86VH2-1"/>
    <property type="nucleotide sequence ID" value="XM_054363251.1"/>
</dbReference>
<dbReference type="RefSeq" id="XP_054219227.1">
    <molecule id="Q86VH2-1"/>
    <property type="nucleotide sequence ID" value="XM_054363252.1"/>
</dbReference>
<dbReference type="RefSeq" id="XP_054219228.1">
    <molecule id="Q86VH2-1"/>
    <property type="nucleotide sequence ID" value="XM_054363253.1"/>
</dbReference>
<dbReference type="RefSeq" id="XP_054219229.1">
    <molecule id="Q86VH2-1"/>
    <property type="nucleotide sequence ID" value="XM_054363254.1"/>
</dbReference>
<dbReference type="RefSeq" id="XP_054219230.1">
    <molecule id="Q86VH2-1"/>
    <property type="nucleotide sequence ID" value="XM_054363255.1"/>
</dbReference>
<dbReference type="RefSeq" id="XP_054219234.1">
    <molecule id="Q86VH2-3"/>
    <property type="nucleotide sequence ID" value="XM_054363259.1"/>
</dbReference>
<dbReference type="SMR" id="Q86VH2"/>
<dbReference type="BioGRID" id="120730">
    <property type="interactions" value="16"/>
</dbReference>
<dbReference type="FunCoup" id="Q86VH2">
    <property type="interactions" value="122"/>
</dbReference>
<dbReference type="IntAct" id="Q86VH2">
    <property type="interactions" value="6"/>
</dbReference>
<dbReference type="MINT" id="Q86VH2"/>
<dbReference type="STRING" id="9606.ENSP00000297814"/>
<dbReference type="ChEMBL" id="CHEMBL3879867"/>
<dbReference type="GlyCosmos" id="Q86VH2">
    <property type="glycosylation" value="2 sites, 1 glycan"/>
</dbReference>
<dbReference type="GlyGen" id="Q86VH2">
    <property type="glycosylation" value="3 sites, 1 O-linked glycan (2 sites)"/>
</dbReference>
<dbReference type="iPTMnet" id="Q86VH2"/>
<dbReference type="PhosphoSitePlus" id="Q86VH2"/>
<dbReference type="BioMuta" id="KIF27"/>
<dbReference type="DMDM" id="74750464"/>
<dbReference type="jPOST" id="Q86VH2"/>
<dbReference type="MassIVE" id="Q86VH2"/>
<dbReference type="PaxDb" id="9606-ENSP00000297814"/>
<dbReference type="PeptideAtlas" id="Q86VH2"/>
<dbReference type="ProteomicsDB" id="70013">
    <molecule id="Q86VH2-1"/>
</dbReference>
<dbReference type="ProteomicsDB" id="70014">
    <molecule id="Q86VH2-2"/>
</dbReference>
<dbReference type="ProteomicsDB" id="70015">
    <molecule id="Q86VH2-3"/>
</dbReference>
<dbReference type="ProteomicsDB" id="70016">
    <molecule id="Q86VH2-4"/>
</dbReference>
<dbReference type="Antibodypedia" id="13061">
    <property type="antibodies" value="66 antibodies from 14 providers"/>
</dbReference>
<dbReference type="DNASU" id="55582"/>
<dbReference type="Ensembl" id="ENST00000297814.7">
    <molecule id="Q86VH2-1"/>
    <property type="protein sequence ID" value="ENSP00000297814.2"/>
    <property type="gene ID" value="ENSG00000165115.15"/>
</dbReference>
<dbReference type="Ensembl" id="ENST00000334204.6">
    <molecule id="Q86VH2-3"/>
    <property type="protein sequence ID" value="ENSP00000333928.2"/>
    <property type="gene ID" value="ENSG00000165115.15"/>
</dbReference>
<dbReference type="Ensembl" id="ENST00000376347.1">
    <molecule id="Q86VH2-4"/>
    <property type="protein sequence ID" value="ENSP00000365525.1"/>
    <property type="gene ID" value="ENSG00000165115.15"/>
</dbReference>
<dbReference type="Ensembl" id="ENST00000413982.5">
    <molecule id="Q86VH2-2"/>
    <property type="protein sequence ID" value="ENSP00000401688.1"/>
    <property type="gene ID" value="ENSG00000165115.15"/>
</dbReference>
<dbReference type="GeneID" id="55582"/>
<dbReference type="KEGG" id="hsa:55582"/>
<dbReference type="MANE-Select" id="ENST00000297814.7">
    <property type="protein sequence ID" value="ENSP00000297814.2"/>
    <property type="RefSeq nucleotide sequence ID" value="NM_017576.4"/>
    <property type="RefSeq protein sequence ID" value="NP_060046.1"/>
</dbReference>
<dbReference type="UCSC" id="uc004ana.6">
    <molecule id="Q86VH2-1"/>
    <property type="organism name" value="human"/>
</dbReference>
<dbReference type="AGR" id="HGNC:18632"/>
<dbReference type="CTD" id="55582"/>
<dbReference type="DisGeNET" id="55582"/>
<dbReference type="GeneCards" id="KIF27"/>
<dbReference type="HGNC" id="HGNC:18632">
    <property type="gene designation" value="KIF27"/>
</dbReference>
<dbReference type="HPA" id="ENSG00000165115">
    <property type="expression patterns" value="Tissue enhanced (testis)"/>
</dbReference>
<dbReference type="MIM" id="611253">
    <property type="type" value="gene"/>
</dbReference>
<dbReference type="neXtProt" id="NX_Q86VH2"/>
<dbReference type="OpenTargets" id="ENSG00000165115"/>
<dbReference type="PharmGKB" id="PA134912901"/>
<dbReference type="VEuPathDB" id="HostDB:ENSG00000165115"/>
<dbReference type="eggNOG" id="KOG0244">
    <property type="taxonomic scope" value="Eukaryota"/>
</dbReference>
<dbReference type="GeneTree" id="ENSGT00940000157487"/>
<dbReference type="HOGENOM" id="CLU_005591_0_0_1"/>
<dbReference type="InParanoid" id="Q86VH2"/>
<dbReference type="OMA" id="YVIMNTF"/>
<dbReference type="OrthoDB" id="3176171at2759"/>
<dbReference type="PAN-GO" id="Q86VH2">
    <property type="GO annotations" value="6 GO annotations based on evolutionary models"/>
</dbReference>
<dbReference type="PhylomeDB" id="Q86VH2"/>
<dbReference type="TreeFam" id="TF325946"/>
<dbReference type="PathwayCommons" id="Q86VH2"/>
<dbReference type="Reactome" id="R-HSA-6811434">
    <property type="pathway name" value="COPI-dependent Golgi-to-ER retrograde traffic"/>
</dbReference>
<dbReference type="Reactome" id="R-HSA-983189">
    <property type="pathway name" value="Kinesins"/>
</dbReference>
<dbReference type="SignaLink" id="Q86VH2"/>
<dbReference type="BioGRID-ORCS" id="55582">
    <property type="hits" value="12 hits in 1147 CRISPR screens"/>
</dbReference>
<dbReference type="ChiTaRS" id="KIF27">
    <property type="organism name" value="human"/>
</dbReference>
<dbReference type="GenomeRNAi" id="55582"/>
<dbReference type="Pharos" id="Q86VH2">
    <property type="development level" value="Tbio"/>
</dbReference>
<dbReference type="PRO" id="PR:Q86VH2"/>
<dbReference type="Proteomes" id="UP000005640">
    <property type="component" value="Chromosome 9"/>
</dbReference>
<dbReference type="RNAct" id="Q86VH2">
    <property type="molecule type" value="protein"/>
</dbReference>
<dbReference type="Bgee" id="ENSG00000165115">
    <property type="expression patterns" value="Expressed in right uterine tube and 103 other cell types or tissues"/>
</dbReference>
<dbReference type="ExpressionAtlas" id="Q86VH2">
    <property type="expression patterns" value="baseline and differential"/>
</dbReference>
<dbReference type="GO" id="GO:0005929">
    <property type="term" value="C:cilium"/>
    <property type="evidence" value="ECO:0000250"/>
    <property type="project" value="UniProtKB"/>
</dbReference>
<dbReference type="GO" id="GO:0005737">
    <property type="term" value="C:cytoplasm"/>
    <property type="evidence" value="ECO:0000318"/>
    <property type="project" value="GO_Central"/>
</dbReference>
<dbReference type="GO" id="GO:0005576">
    <property type="term" value="C:extracellular region"/>
    <property type="evidence" value="ECO:0007669"/>
    <property type="project" value="GOC"/>
</dbReference>
<dbReference type="GO" id="GO:0005871">
    <property type="term" value="C:kinesin complex"/>
    <property type="evidence" value="ECO:0000318"/>
    <property type="project" value="GO_Central"/>
</dbReference>
<dbReference type="GO" id="GO:0005874">
    <property type="term" value="C:microtubule"/>
    <property type="evidence" value="ECO:0000318"/>
    <property type="project" value="GO_Central"/>
</dbReference>
<dbReference type="GO" id="GO:0005524">
    <property type="term" value="F:ATP binding"/>
    <property type="evidence" value="ECO:0007669"/>
    <property type="project" value="UniProtKB-KW"/>
</dbReference>
<dbReference type="GO" id="GO:0016887">
    <property type="term" value="F:ATP hydrolysis activity"/>
    <property type="evidence" value="ECO:0000318"/>
    <property type="project" value="GO_Central"/>
</dbReference>
<dbReference type="GO" id="GO:0008017">
    <property type="term" value="F:microtubule binding"/>
    <property type="evidence" value="ECO:0000318"/>
    <property type="project" value="GO_Central"/>
</dbReference>
<dbReference type="GO" id="GO:0003777">
    <property type="term" value="F:microtubule motor activity"/>
    <property type="evidence" value="ECO:0000318"/>
    <property type="project" value="GO_Central"/>
</dbReference>
<dbReference type="GO" id="GO:0060271">
    <property type="term" value="P:cilium assembly"/>
    <property type="evidence" value="ECO:0000250"/>
    <property type="project" value="UniProtKB"/>
</dbReference>
<dbReference type="GO" id="GO:0003351">
    <property type="term" value="P:epithelial cilium movement involved in extracellular fluid movement"/>
    <property type="evidence" value="ECO:0007669"/>
    <property type="project" value="Ensembl"/>
</dbReference>
<dbReference type="GO" id="GO:0051649">
    <property type="term" value="P:establishment of localization in cell"/>
    <property type="evidence" value="ECO:0007669"/>
    <property type="project" value="Ensembl"/>
</dbReference>
<dbReference type="GO" id="GO:0007018">
    <property type="term" value="P:microtubule-based movement"/>
    <property type="evidence" value="ECO:0000318"/>
    <property type="project" value="GO_Central"/>
</dbReference>
<dbReference type="GO" id="GO:0021591">
    <property type="term" value="P:ventricular system development"/>
    <property type="evidence" value="ECO:0007669"/>
    <property type="project" value="Ensembl"/>
</dbReference>
<dbReference type="CDD" id="cd01372">
    <property type="entry name" value="KISc_KIF4"/>
    <property type="match status" value="1"/>
</dbReference>
<dbReference type="FunFam" id="3.40.850.10:FF:000025">
    <property type="entry name" value="kinesin-like protein KIF27 isoform X1"/>
    <property type="match status" value="1"/>
</dbReference>
<dbReference type="Gene3D" id="3.40.850.10">
    <property type="entry name" value="Kinesin motor domain"/>
    <property type="match status" value="1"/>
</dbReference>
<dbReference type="InterPro" id="IPR027640">
    <property type="entry name" value="Kinesin-like_fam"/>
</dbReference>
<dbReference type="InterPro" id="IPR019821">
    <property type="entry name" value="Kinesin_motor_CS"/>
</dbReference>
<dbReference type="InterPro" id="IPR001752">
    <property type="entry name" value="Kinesin_motor_dom"/>
</dbReference>
<dbReference type="InterPro" id="IPR036961">
    <property type="entry name" value="Kinesin_motor_dom_sf"/>
</dbReference>
<dbReference type="InterPro" id="IPR027417">
    <property type="entry name" value="P-loop_NTPase"/>
</dbReference>
<dbReference type="PANTHER" id="PTHR47969">
    <property type="entry name" value="CHROMOSOME-ASSOCIATED KINESIN KIF4A-RELATED"/>
    <property type="match status" value="1"/>
</dbReference>
<dbReference type="PANTHER" id="PTHR47969:SF30">
    <property type="entry name" value="KINESIN FAMILY MEMBER 27"/>
    <property type="match status" value="1"/>
</dbReference>
<dbReference type="Pfam" id="PF00225">
    <property type="entry name" value="Kinesin"/>
    <property type="match status" value="1"/>
</dbReference>
<dbReference type="PRINTS" id="PR00380">
    <property type="entry name" value="KINESINHEAVY"/>
</dbReference>
<dbReference type="SMART" id="SM00129">
    <property type="entry name" value="KISc"/>
    <property type="match status" value="1"/>
</dbReference>
<dbReference type="SUPFAM" id="SSF52540">
    <property type="entry name" value="P-loop containing nucleoside triphosphate hydrolases"/>
    <property type="match status" value="1"/>
</dbReference>
<dbReference type="PROSITE" id="PS00411">
    <property type="entry name" value="KINESIN_MOTOR_1"/>
    <property type="match status" value="1"/>
</dbReference>
<dbReference type="PROSITE" id="PS50067">
    <property type="entry name" value="KINESIN_MOTOR_2"/>
    <property type="match status" value="1"/>
</dbReference>
<organism>
    <name type="scientific">Homo sapiens</name>
    <name type="common">Human</name>
    <dbReference type="NCBI Taxonomy" id="9606"/>
    <lineage>
        <taxon>Eukaryota</taxon>
        <taxon>Metazoa</taxon>
        <taxon>Chordata</taxon>
        <taxon>Craniata</taxon>
        <taxon>Vertebrata</taxon>
        <taxon>Euteleostomi</taxon>
        <taxon>Mammalia</taxon>
        <taxon>Eutheria</taxon>
        <taxon>Euarchontoglires</taxon>
        <taxon>Primates</taxon>
        <taxon>Haplorrhini</taxon>
        <taxon>Catarrhini</taxon>
        <taxon>Hominidae</taxon>
        <taxon>Homo</taxon>
    </lineage>
</organism>
<evidence type="ECO:0000250" key="1"/>
<evidence type="ECO:0000250" key="2">
    <source>
        <dbReference type="UniProtKB" id="Q7M6Z4"/>
    </source>
</evidence>
<evidence type="ECO:0000250" key="3">
    <source>
        <dbReference type="UniProtKB" id="Q7M6Z5"/>
    </source>
</evidence>
<evidence type="ECO:0000255" key="4"/>
<evidence type="ECO:0000255" key="5">
    <source>
        <dbReference type="PROSITE-ProRule" id="PRU00283"/>
    </source>
</evidence>
<evidence type="ECO:0000256" key="6">
    <source>
        <dbReference type="SAM" id="MobiDB-lite"/>
    </source>
</evidence>
<evidence type="ECO:0000269" key="7">
    <source>
    </source>
</evidence>
<evidence type="ECO:0000303" key="8">
    <source>
    </source>
</evidence>
<evidence type="ECO:0000305" key="9"/>
<name>KIF27_HUMAN</name>
<feature type="chain" id="PRO_0000307143" description="Kinesin-like protein KIF27">
    <location>
        <begin position="1"/>
        <end position="1401"/>
    </location>
</feature>
<feature type="domain" description="Kinesin motor" evidence="5">
    <location>
        <begin position="5"/>
        <end position="341"/>
    </location>
</feature>
<feature type="region of interest" description="Disordered" evidence="6">
    <location>
        <begin position="643"/>
        <end position="662"/>
    </location>
</feature>
<feature type="region of interest" description="Disordered" evidence="6">
    <location>
        <begin position="1259"/>
        <end position="1332"/>
    </location>
</feature>
<feature type="coiled-coil region" evidence="4">
    <location>
        <begin position="352"/>
        <end position="413"/>
    </location>
</feature>
<feature type="coiled-coil region" evidence="4">
    <location>
        <begin position="489"/>
        <end position="557"/>
    </location>
</feature>
<feature type="coiled-coil region" evidence="4">
    <location>
        <begin position="705"/>
        <end position="886"/>
    </location>
</feature>
<feature type="coiled-coil region" evidence="4">
    <location>
        <begin position="916"/>
        <end position="1070"/>
    </location>
</feature>
<feature type="coiled-coil region" evidence="4">
    <location>
        <begin position="1118"/>
        <end position="1154"/>
    </location>
</feature>
<feature type="coiled-coil region" evidence="4">
    <location>
        <begin position="1190"/>
        <end position="1219"/>
    </location>
</feature>
<feature type="compositionally biased region" description="Basic and acidic residues" evidence="6">
    <location>
        <begin position="1259"/>
        <end position="1280"/>
    </location>
</feature>
<feature type="compositionally biased region" description="Polar residues" evidence="6">
    <location>
        <begin position="1281"/>
        <end position="1292"/>
    </location>
</feature>
<feature type="binding site" evidence="5">
    <location>
        <begin position="84"/>
        <end position="91"/>
    </location>
    <ligand>
        <name>ATP</name>
        <dbReference type="ChEBI" id="CHEBI:30616"/>
    </ligand>
</feature>
<feature type="modified residue" description="Phosphoserine" evidence="2">
    <location>
        <position position="643"/>
    </location>
</feature>
<feature type="modified residue" description="Phosphoserine" evidence="2">
    <location>
        <position position="646"/>
    </location>
</feature>
<feature type="modified residue" description="Phosphoserine" evidence="3">
    <location>
        <position position="672"/>
    </location>
</feature>
<feature type="modified residue" description="Phosphoserine" evidence="3">
    <location>
        <position position="675"/>
    </location>
</feature>
<feature type="modified residue" description="Phosphoserine" evidence="3">
    <location>
        <position position="704"/>
    </location>
</feature>
<feature type="modified residue" description="Phosphoserine" evidence="3">
    <location>
        <position position="999"/>
    </location>
</feature>
<feature type="modified residue" description="Phosphoserine" evidence="3">
    <location>
        <position position="1367"/>
    </location>
</feature>
<feature type="modified residue" description="Phosphoserine" evidence="3">
    <location>
        <position position="1389"/>
    </location>
</feature>
<feature type="splice variant" id="VSP_028602" description="In isoform 4." evidence="9">
    <location>
        <begin position="1"/>
        <end position="609"/>
    </location>
</feature>
<feature type="splice variant" id="VSP_028603" description="In isoform 2." evidence="8">
    <location>
        <begin position="816"/>
        <end position="881"/>
    </location>
</feature>
<feature type="splice variant" id="VSP_028604" description="In isoform 3." evidence="8">
    <location>
        <begin position="882"/>
        <end position="978"/>
    </location>
</feature>
<feature type="splice variant" id="VSP_028605" description="In isoform 4." evidence="9">
    <original>EIQLKTGQEEGLKPK</original>
    <variation>VILSYIPAKYNMKC</variation>
    <location>
        <begin position="882"/>
        <end position="896"/>
    </location>
</feature>
<feature type="splice variant" id="VSP_028606" description="In isoform 4." evidence="9">
    <location>
        <begin position="897"/>
        <end position="1401"/>
    </location>
</feature>
<feature type="sequence variant" id="VAR_035361" description="In dbSNP:rs12001918.">
    <original>I</original>
    <variation>V</variation>
    <location>
        <position position="213"/>
    </location>
</feature>
<feature type="sequence variant" id="VAR_035362" description="In dbSNP:rs35594736.">
    <original>R</original>
    <variation>Q</variation>
    <location>
        <position position="300"/>
    </location>
</feature>
<feature type="sequence variant" id="VAR_061286" description="In dbSNP:rs55654273." evidence="7">
    <original>N</original>
    <variation>D</variation>
    <location>
        <position position="1036"/>
    </location>
</feature>
<protein>
    <recommendedName>
        <fullName>Kinesin-like protein KIF27</fullName>
    </recommendedName>
</protein>
<sequence>MEEIPVKVAVRIRPLLCKEALHNHQVCVRVIPNSQQVIIGRDRVFTFDFVFGKNSTQDEVYNTCIKPLVLSLIEGYNATVFAYGQTGSGKTYTIGGGHIASVVEGQKGIIPRAIQEIFQSISEHPSIDFNVKVSYIEVYKEDLRDLLELETSMKDLHIREDEKGNTVIVGAKECHVESAGEVMSLLEMGNAARHTGTTQMNEHSSRSHAIFTISICQVHKNMEAAEDGSWYSPRHIVSKFHFVDLAGSERVTKTGNTGERFKESIQINSGLLALGNVISALGDPRRKSSHIPYRDAKITRLLKDSLGGSAKTVMITCVSPSSSNFDESLNSLKYANRARNIRNKPTVNFSPESDRIDEMEFEIKLLREALQSQQAGVSQTTQINREGSPDTNRIHSLEEQVAQLQGECLGYQCCVEEAFTFLVDLKDTVRLNEKQQHKLQEWFNMIQEVRKAVLTSFRGIGGTASLEEGPQHVTVLQLKRELKKCQCVLAADEVVFNQKELEVKELKNQVQMMVQENKGHAVSLKEAQKVNRLQNEKIIEQQLLVDQLSEELTKLNLSVTSSAKENCGDGPDARIPERRPYTVPFDTHLGHYIYIPSRQDSRKVHTSPPMYSLDRIFAGFRTRSQMLLGHIEEQDKVLHCQFSDNSDDEESEGQEKSGTRCRSRSWIQKPDSVCSLVELSDTQDETQKSDLENEDLKIDCLQESQELNLQKLKNSERILTEAKQKMRELTINIKMKEDLIKELIKTGNDAKSVSKQYSLKVTKLEHDAEQAKVELIETQKQLQELENKDLSDVAMKVKLQKEFRKKMDAAKLRVQVLQKKQQDSKKLASLSIQNEKRANELEQSVDHMKYQKIQLQRKLREENEKRKQLDAVIKRDQQKIKEIQLKTGQEEGLKPKAEDLDACNLKRRKGSFGSIDHLQKLDEQKKWLDEEVEKVLNQRQELEELEADLKKREAIVSKKEALLQEKSHLENKKLRSSQALNTDSLKISTRLNLLEQELSEKNVQLQTSTAEEKTKISEQVEVLQKEKDQLQKRRHNVDEKLKNGRVLSPEEEHVLFQLEEGIEALEAAIEYRNESIQNRQKSLRASFHNLSRGEANVLEKLACLSPVEIRTILFRYFNKVVNLREAERKQQLYNEEMKMKVLERDNMVRELESALDHLKLQCDRRLTLQQKEHEQKMQLLLHHFKEQDGEGIMETFKTYEDKIQQLEKDLYFYKKTSRDHKKKLKELVGEAIRRQLAPSEYQEAGDGVLKPEGGGMLSEELKWASRPESMKLSGREREMDSSASSLRTQPNPQKLWEDIPELPPIHSSLAPPSGHMLGNENKTETDDNQFTKSHSRLSSQIQVVGNVGRLHGVTPVKLCRKELRQISALELSLRRSSLGVGIGSMAADSIEVSRKPRDLKT</sequence>
<comment type="function">
    <text evidence="1">Plays an essential role in motile ciliogenesis.</text>
</comment>
<comment type="subunit">
    <text evidence="1">Interacts with STK36.</text>
</comment>
<comment type="interaction">
    <interactant intactId="EBI-7950718">
        <id>Q86VH2</id>
    </interactant>
    <interactant intactId="EBI-5651459">
        <id>P43357</id>
        <label>MAGEA3</label>
    </interactant>
    <organismsDiffer>false</organismsDiffer>
    <experiments>3</experiments>
</comment>
<comment type="interaction">
    <interactant intactId="EBI-7950718">
        <id>Q86VH2</id>
    </interactant>
    <interactant intactId="EBI-1045155">
        <id>P43360</id>
        <label>MAGEA6</label>
    </interactant>
    <organismsDiffer>false</organismsDiffer>
    <experiments>3</experiments>
</comment>
<comment type="subcellular location">
    <subcellularLocation>
        <location evidence="9">Cytoplasm</location>
        <location evidence="9">Cytoskeleton</location>
    </subcellularLocation>
    <subcellularLocation>
        <location evidence="1">Cell projection</location>
        <location evidence="1">Cilium</location>
    </subcellularLocation>
    <text evidence="1">Localizes to centrioles and basal bodies.</text>
</comment>
<comment type="alternative products">
    <event type="alternative splicing"/>
    <isoform>
        <id>Q86VH2-1</id>
        <name>1</name>
        <name>KIF27A</name>
        <sequence type="displayed"/>
    </isoform>
    <isoform>
        <id>Q86VH2-2</id>
        <name>2</name>
        <name>KIF27B</name>
        <sequence type="described" ref="VSP_028603"/>
    </isoform>
    <isoform>
        <id>Q86VH2-3</id>
        <name>3</name>
        <name>KIF27C</name>
        <sequence type="described" ref="VSP_028604"/>
    </isoform>
    <isoform>
        <id>Q86VH2-4</id>
        <name>4</name>
        <sequence type="described" ref="VSP_028602 VSP_028605 VSP_028606"/>
    </isoform>
</comment>
<comment type="tissue specificity">
    <text>Testis, pancreatic islet, germ cell tumors and Jurkat T-cells.</text>
</comment>
<comment type="similarity">
    <text evidence="5">Belongs to the TRAFAC class myosin-kinesin ATPase superfamily. Kinesin family. KIF27 subfamily.</text>
</comment>
<comment type="sequence caution" evidence="9">
    <conflict type="frameshift">
        <sequence resource="EMBL-CDS" id="CAB63770"/>
    </conflict>
</comment>